<gene>
    <name evidence="19" type="primary">ST6GALNAC1</name>
    <name type="synonym">SIAT7A</name>
    <name evidence="13" type="ORF">UNQ543/PRO848</name>
</gene>
<accession>Q9NSC7</accession>
<accession>Q6UW90</accession>
<accession>Q9NSC6</accession>
<feature type="chain" id="PRO_0000149269" description="Alpha-N-acetylgalactosaminide alpha-2,6-sialyltransferase 1">
    <location>
        <begin position="1"/>
        <end position="600"/>
    </location>
</feature>
<feature type="topological domain" description="Cytoplasmic" evidence="3">
    <location>
        <begin position="1"/>
        <end position="14"/>
    </location>
</feature>
<feature type="transmembrane region" description="Helical; Signal-anchor for type II membrane protein" evidence="3">
    <location>
        <begin position="15"/>
        <end position="35"/>
    </location>
</feature>
<feature type="topological domain" description="Lumenal" evidence="3">
    <location>
        <begin position="36"/>
        <end position="600"/>
    </location>
</feature>
<feature type="region of interest" description="Disordered" evidence="4">
    <location>
        <begin position="38"/>
        <end position="191"/>
    </location>
</feature>
<feature type="region of interest" description="Disordered" evidence="4">
    <location>
        <begin position="208"/>
        <end position="248"/>
    </location>
</feature>
<feature type="compositionally biased region" description="Basic and acidic residues" evidence="4">
    <location>
        <begin position="46"/>
        <end position="55"/>
    </location>
</feature>
<feature type="compositionally biased region" description="Polar residues" evidence="4">
    <location>
        <begin position="84"/>
        <end position="94"/>
    </location>
</feature>
<feature type="compositionally biased region" description="Polar residues" evidence="4">
    <location>
        <begin position="151"/>
        <end position="179"/>
    </location>
</feature>
<feature type="compositionally biased region" description="Polar residues" evidence="4">
    <location>
        <begin position="209"/>
        <end position="219"/>
    </location>
</feature>
<feature type="glycosylation site" description="N-linked (GlcNAc...) asparagine" evidence="3">
    <location>
        <position position="300"/>
    </location>
</feature>
<feature type="glycosylation site" description="N-linked (GlcNAc...) asparagine" evidence="3">
    <location>
        <position position="311"/>
    </location>
</feature>
<feature type="glycosylation site" description="N-linked (GlcNAc...) asparagine" evidence="3">
    <location>
        <position position="331"/>
    </location>
</feature>
<feature type="glycosylation site" description="N-linked (GlcNAc...) asparagine" evidence="3">
    <location>
        <position position="375"/>
    </location>
</feature>
<feature type="glycosylation site" description="N-linked (GlcNAc...) asparagine" evidence="3">
    <location>
        <position position="460"/>
    </location>
</feature>
<feature type="disulfide bond" evidence="2">
    <location>
        <begin position="279"/>
        <end position="362"/>
    </location>
</feature>
<feature type="disulfide bond" evidence="2">
    <location>
        <begin position="365"/>
        <end position="533"/>
    </location>
</feature>
<feature type="sequence variant" id="VAR_021514" description="In dbSNP:rs8077382." evidence="6">
    <original>V</original>
    <variation>A</variation>
    <location>
        <position position="80"/>
    </location>
</feature>
<feature type="sequence variant" id="VAR_086492" description="Found in patients with Inflammatory bowel disease; uncertain significance; does dot affect protein sialyltransferase activity; dbSNP:rs146032525." evidence="10">
    <original>T</original>
    <variation>P</variation>
    <location>
        <position position="207"/>
    </location>
</feature>
<feature type="sequence variant" id="VAR_086493" description="Found in patients with Inflammatory bowel disease; uncertain significance; reduced protein sialyltransferase activity; dbSNP:rs548273650." evidence="10">
    <original>R</original>
    <variation>C</variation>
    <location>
        <position position="341"/>
    </location>
</feature>
<feature type="sequence variant" id="VAR_086494" description="Found in patients with inflammatory bowel disease; likely pathogenic; impaired localization to the Golgi apparatus; abolished protein sialyltransferase activity; dbSNP:rs755904228." evidence="10">
    <original>R</original>
    <variation>Q</variation>
    <location>
        <position position="391"/>
    </location>
</feature>
<feature type="sequence variant" id="VAR_049226" description="In dbSNP:rs35948039.">
    <original>I</original>
    <variation>V</variation>
    <location>
        <position position="424"/>
    </location>
</feature>
<feature type="sequence variant" id="VAR_086495" description="Found in patients with Inflammatory bowel disease; uncertain significance; reduced protein sialyltransferase activity; dbSNP:rs150096642." evidence="10">
    <original>T</original>
    <variation>M</variation>
    <location>
        <position position="462"/>
    </location>
</feature>
<comment type="function">
    <text evidence="5 7 8 9 10">Protein sialyltransferase specifically expressed in goblet cells that plays a key role in intestinal host-commensal homeostasis (PubMed:35303419). Conjugates sialic acid with an alpha-2-6 linkage to N-acetylgalactosamine (GalNAc) glycan chains linked to serine or threonine in glycoproteins (PubMed:10536037, PubMed:15466199, PubMed:16319059, PubMed:31719620, PubMed:35303419). Catalyzes the formation of the sialyl-Tn (S-Tn) antigen, an antigen found in intestinal goblet cells, as well as ulcerative colitis (UC) and various cancers (PubMed:15466199, PubMed:16319059, PubMed:31719620, PubMed:35303419). Protein sialylation in globlet cells is essential for mucus integrity and is required to protect the intestinal mucus against excessive bacterial proteolytic degradation (PubMed:35303419).</text>
</comment>
<comment type="catalytic activity">
    <reaction evidence="8 10">
        <text>a beta-D-galactosyl-(1-&gt;3)-N-acetyl-alpha-D-galactosaminyl derivative + CMP-N-acetyl-beta-neuraminate = a beta-D-galactosyl-(1-&gt;3)-[N-acetyl-alpha-neuraminyl-(2-&gt;6)]-N-acetyl-alpha-D-galactosaminyl derivative + CMP + H(+)</text>
        <dbReference type="Rhea" id="RHEA:11136"/>
        <dbReference type="ChEBI" id="CHEBI:15378"/>
        <dbReference type="ChEBI" id="CHEBI:57812"/>
        <dbReference type="ChEBI" id="CHEBI:60377"/>
        <dbReference type="ChEBI" id="CHEBI:133470"/>
        <dbReference type="ChEBI" id="CHEBI:140764"/>
        <dbReference type="EC" id="2.4.3.3"/>
    </reaction>
    <physiologicalReaction direction="left-to-right" evidence="8 10">
        <dbReference type="Rhea" id="RHEA:11137"/>
    </physiologicalReaction>
</comment>
<comment type="catalytic activity">
    <reaction evidence="9">
        <text>a 3-O-[N-acetyl-alpha-D-galactosaminyl]-L-seryl-[protein] + CMP-N-acetyl-beta-neuraminate = a 3-O-[N-acetyl-alpha-neuraminosyl-(2-&gt;6)-N-acetyl-alpha-D-galactosaminyl]-L-seryl-[protein] + CMP + H(+)</text>
        <dbReference type="Rhea" id="RHEA:81647"/>
        <dbReference type="Rhea" id="RHEA-COMP:12788"/>
        <dbReference type="Rhea" id="RHEA-COMP:19723"/>
        <dbReference type="ChEBI" id="CHEBI:15378"/>
        <dbReference type="ChEBI" id="CHEBI:53604"/>
        <dbReference type="ChEBI" id="CHEBI:57812"/>
        <dbReference type="ChEBI" id="CHEBI:60377"/>
        <dbReference type="ChEBI" id="CHEBI:231972"/>
    </reaction>
    <physiologicalReaction direction="left-to-right" evidence="18">
        <dbReference type="Rhea" id="RHEA:81648"/>
    </physiologicalReaction>
</comment>
<comment type="catalytic activity">
    <reaction evidence="5 7 9">
        <text>a 3-O-[N-acetyl-alpha-D-galactosaminyl]-L-threonyl-[protein] + CMP-N-acetyl-beta-neuraminate = a 3-O-[N-acetyl-alpha-neuraminosyl-(2-&gt;6)-N-acetyl-alpha-D-galactosaminyl]-L-threonyl-[protein] + CMP + H(+)</text>
        <dbReference type="Rhea" id="RHEA:81643"/>
        <dbReference type="Rhea" id="RHEA-COMP:11689"/>
        <dbReference type="Rhea" id="RHEA-COMP:19720"/>
        <dbReference type="ChEBI" id="CHEBI:15378"/>
        <dbReference type="ChEBI" id="CHEBI:57812"/>
        <dbReference type="ChEBI" id="CHEBI:60377"/>
        <dbReference type="ChEBI" id="CHEBI:87075"/>
        <dbReference type="ChEBI" id="CHEBI:231970"/>
    </reaction>
    <physiologicalReaction direction="left-to-right" evidence="16 17 18">
        <dbReference type="Rhea" id="RHEA:81644"/>
    </physiologicalReaction>
</comment>
<comment type="catalytic activity">
    <reaction evidence="9">
        <text>a 3-O-[beta-D-galactosyl-(1-&gt;3)-N-acetyl-alpha-D-galactosaminyl]-L-seryl-[protein] + CMP-N-acetyl-beta-neuraminate = a 3-O-{beta-D-galactosyl-(1-&gt;3)-[N-acetyl-alpha-neuraminosyl-(2-&gt;6)]-N-acetyl-alpha-D-galactosaminyl}-L-seryl-[protein] + CMP + H(+)</text>
        <dbReference type="Rhea" id="RHEA:81655"/>
        <dbReference type="Rhea" id="RHEA-COMP:13922"/>
        <dbReference type="Rhea" id="RHEA-COMP:19724"/>
        <dbReference type="ChEBI" id="CHEBI:15378"/>
        <dbReference type="ChEBI" id="CHEBI:57812"/>
        <dbReference type="ChEBI" id="CHEBI:60377"/>
        <dbReference type="ChEBI" id="CHEBI:137949"/>
        <dbReference type="ChEBI" id="CHEBI:231973"/>
    </reaction>
    <physiologicalReaction direction="left-to-right" evidence="18">
        <dbReference type="Rhea" id="RHEA:81656"/>
    </physiologicalReaction>
</comment>
<comment type="catalytic activity">
    <reaction evidence="1">
        <text>a 3-O-[beta-D-galactosyl-(1-&gt;3)-N-acetyl-alpha-D-galactosaminyl]-L-threonyl-[protein] + CMP-N-acetyl-beta-neuraminate = a 3-O-{beta-D-galactosyl-(1-&gt;3)-[N-acetyl-alpha-neuraminosyl-(2-&gt;6)]-N-acetyl-alpha-D-galactosaminyl}-L-threonyl-[protein] + CMP + H(+)</text>
        <dbReference type="Rhea" id="RHEA:81651"/>
        <dbReference type="Rhea" id="RHEA-COMP:13923"/>
        <dbReference type="Rhea" id="RHEA-COMP:19722"/>
        <dbReference type="ChEBI" id="CHEBI:15378"/>
        <dbReference type="ChEBI" id="CHEBI:57812"/>
        <dbReference type="ChEBI" id="CHEBI:60377"/>
        <dbReference type="ChEBI" id="CHEBI:137950"/>
        <dbReference type="ChEBI" id="CHEBI:231971"/>
    </reaction>
    <physiologicalReaction direction="left-to-right" evidence="1">
        <dbReference type="Rhea" id="RHEA:81652"/>
    </physiologicalReaction>
</comment>
<comment type="catalytic activity">
    <reaction evidence="7">
        <text>a 3-O-[N-acetyl-alpha-neuraminyl-(2-&gt;3)-beta-D-galactosyl-(1-&gt;3)-N-acetyl-alpha-D-galactosaminyl]-L-threonyl-[protein] + CMP-N-acetyl-beta-neuraminate = a 3-O-{alpha-Neu5Ac-(2-&gt;3)-beta-D-Gal-(1-&gt;3)-[alpha-Neu5Ac-(2-&gt;6)]-alpha-D-GalNAc}-L-threonyl-[protein] + CMP + H(+)</text>
        <dbReference type="Rhea" id="RHEA:81659"/>
        <dbReference type="Rhea" id="RHEA-COMP:14417"/>
        <dbReference type="Rhea" id="RHEA-COMP:16763"/>
        <dbReference type="ChEBI" id="CHEBI:15378"/>
        <dbReference type="ChEBI" id="CHEBI:57812"/>
        <dbReference type="ChEBI" id="CHEBI:60377"/>
        <dbReference type="ChEBI" id="CHEBI:139598"/>
        <dbReference type="ChEBI" id="CHEBI:156398"/>
    </reaction>
    <physiologicalReaction direction="left-to-right" evidence="17">
        <dbReference type="Rhea" id="RHEA:81660"/>
    </physiologicalReaction>
</comment>
<comment type="biophysicochemical properties">
    <kinetics>
        <KM evidence="7">108 uM for CMP-N-acetyl-beta-neuraminate</KM>
    </kinetics>
</comment>
<comment type="pathway">
    <text evidence="8 10">Protein modification; protein glycosylation.</text>
</comment>
<comment type="interaction">
    <interactant intactId="EBI-2854712">
        <id>Q9NSC7</id>
    </interactant>
    <interactant intactId="EBI-349854">
        <id>P13569</id>
        <label>CFTR</label>
    </interactant>
    <organismsDiffer>false</organismsDiffer>
    <experiments>5</experiments>
</comment>
<comment type="interaction">
    <interactant intactId="EBI-2854712">
        <id>Q9NSC7</id>
    </interactant>
    <interactant intactId="EBI-354943">
        <id>Q05639</id>
        <label>EEF1A2</label>
    </interactant>
    <organismsDiffer>false</organismsDiffer>
    <experiments>2</experiments>
</comment>
<comment type="subcellular location">
    <subcellularLocation>
        <location evidence="8 10">Golgi apparatus membrane</location>
        <topology evidence="15">Single-pass type II membrane protein</topology>
    </subcellularLocation>
</comment>
<comment type="tissue specificity">
    <text evidence="8 10">Expression is restricted to the gastrointestinal tract (PubMed:16319059). Highly expressed in goblet cells (PubMed:35303419). Also expressed in various tumor cells (PubMed:16319059).</text>
</comment>
<comment type="PTM">
    <text evidence="10">Glycosylated; autosialylated.</text>
</comment>
<comment type="disease">
    <text evidence="10">Inflammatory bowel disease (PubMed:35303419). A chronic, relapsing inflammation of the gastrointestinal tract with a complex etiology (PubMed:35303419). It is subdivided into Crohn disease and ulcerative colitis phenotypes (PubMed:35303419). Crohn disease may affect any part of the gastrointestinal tract from the mouth to the anus, but most frequently it involves the terminal ileum and colon (PubMed:35303419). Bowel inflammation is transmural and discontinuous; it may contain granulomas or be associated with intestinal or perianal fistulas (PubMed:35303419). In contrast, in ulcerative colitis, the inflammation is continuous and limited to rectal and colonic mucosal layers; fistulas and granulomas are not observed (PubMed:35303419). Both diseases include extraintestinal inflammation of the skin, eyes, or joints (PubMed:35303419). Disease susceptibility is associated with variants affecting the gene represented in this entry (PubMed:35303419).</text>
</comment>
<comment type="similarity">
    <text evidence="15">Belongs to the glycosyltransferase 29 family.</text>
</comment>
<comment type="online information" name="Atlas of Genetics and Cytogenetics in Oncology and Haematology">
    <link uri="https://atlasgeneticsoncology.org/gene/44087/ST6GALNAC1"/>
</comment>
<comment type="online information" name="Functional Glycomics Gateway - GTase">
    <link uri="http://www.functionalglycomics.org/glycomics/molecule/jsp/glycoEnzyme/viewGlycoEnzyme.jsp?gbpId=gt_hum_630"/>
    <text>ST6GalNAc I</text>
</comment>
<comment type="online information" name="Protein Spotlight">
    <link uri="https://www.proteinspotlight.org/back_issues/257/"/>
    <text>The slime inside us - Issue 257 of April 2023</text>
</comment>
<keyword id="KW-0225">Disease variant</keyword>
<keyword id="KW-1015">Disulfide bond</keyword>
<keyword id="KW-0325">Glycoprotein</keyword>
<keyword id="KW-0328">Glycosyltransferase</keyword>
<keyword id="KW-0333">Golgi apparatus</keyword>
<keyword id="KW-0472">Membrane</keyword>
<keyword id="KW-1267">Proteomics identification</keyword>
<keyword id="KW-1185">Reference proteome</keyword>
<keyword id="KW-0735">Signal-anchor</keyword>
<keyword id="KW-0808">Transferase</keyword>
<keyword id="KW-0812">Transmembrane</keyword>
<keyword id="KW-1133">Transmembrane helix</keyword>
<organism>
    <name type="scientific">Homo sapiens</name>
    <name type="common">Human</name>
    <dbReference type="NCBI Taxonomy" id="9606"/>
    <lineage>
        <taxon>Eukaryota</taxon>
        <taxon>Metazoa</taxon>
        <taxon>Chordata</taxon>
        <taxon>Craniata</taxon>
        <taxon>Vertebrata</taxon>
        <taxon>Euteleostomi</taxon>
        <taxon>Mammalia</taxon>
        <taxon>Eutheria</taxon>
        <taxon>Euarchontoglires</taxon>
        <taxon>Primates</taxon>
        <taxon>Haplorrhini</taxon>
        <taxon>Catarrhini</taxon>
        <taxon>Hominidae</taxon>
        <taxon>Homo</taxon>
    </lineage>
</organism>
<dbReference type="EC" id="2.4.3.3" evidence="8 10"/>
<dbReference type="EMBL" id="Y11339">
    <property type="protein sequence ID" value="CAA72179.2"/>
    <property type="molecule type" value="mRNA"/>
</dbReference>
<dbReference type="EMBL" id="Y11340">
    <property type="protein sequence ID" value="CAA72180.1"/>
    <property type="molecule type" value="Genomic_DNA"/>
</dbReference>
<dbReference type="EMBL" id="AY096001">
    <property type="protein sequence ID" value="AAM22800.1"/>
    <property type="molecule type" value="mRNA"/>
</dbReference>
<dbReference type="EMBL" id="AY358918">
    <property type="protein sequence ID" value="AAQ89277.1"/>
    <property type="molecule type" value="mRNA"/>
</dbReference>
<dbReference type="CCDS" id="CCDS11748.1"/>
<dbReference type="RefSeq" id="NP_060884.1">
    <property type="nucleotide sequence ID" value="NM_018414.5"/>
</dbReference>
<dbReference type="SMR" id="Q9NSC7"/>
<dbReference type="BioGRID" id="120918">
    <property type="interactions" value="8"/>
</dbReference>
<dbReference type="FunCoup" id="Q9NSC7">
    <property type="interactions" value="170"/>
</dbReference>
<dbReference type="IntAct" id="Q9NSC7">
    <property type="interactions" value="4"/>
</dbReference>
<dbReference type="MINT" id="Q9NSC7"/>
<dbReference type="STRING" id="9606.ENSP00000156626"/>
<dbReference type="CAZy" id="GT29">
    <property type="family name" value="Glycosyltransferase Family 29"/>
</dbReference>
<dbReference type="GlyCosmos" id="Q9NSC7">
    <property type="glycosylation" value="5 sites, No reported glycans"/>
</dbReference>
<dbReference type="GlyGen" id="Q9NSC7">
    <property type="glycosylation" value="12 sites, 2 O-linked glycans (6 sites)"/>
</dbReference>
<dbReference type="iPTMnet" id="Q9NSC7"/>
<dbReference type="PhosphoSitePlus" id="Q9NSC7"/>
<dbReference type="SwissPalm" id="Q9NSC7"/>
<dbReference type="BioMuta" id="ST6GALNAC1"/>
<dbReference type="DMDM" id="21759444"/>
<dbReference type="jPOST" id="Q9NSC7"/>
<dbReference type="MassIVE" id="Q9NSC7"/>
<dbReference type="PaxDb" id="9606-ENSP00000156626"/>
<dbReference type="PeptideAtlas" id="Q9NSC7"/>
<dbReference type="ProteomicsDB" id="82533"/>
<dbReference type="Antibodypedia" id="2230">
    <property type="antibodies" value="140 antibodies from 22 providers"/>
</dbReference>
<dbReference type="DNASU" id="55808"/>
<dbReference type="Ensembl" id="ENST00000156626.12">
    <property type="protein sequence ID" value="ENSP00000156626.6"/>
    <property type="gene ID" value="ENSG00000070526.15"/>
</dbReference>
<dbReference type="GeneID" id="55808"/>
<dbReference type="KEGG" id="hsa:55808"/>
<dbReference type="MANE-Select" id="ENST00000156626.12">
    <property type="protein sequence ID" value="ENSP00000156626.6"/>
    <property type="RefSeq nucleotide sequence ID" value="NM_018414.5"/>
    <property type="RefSeq protein sequence ID" value="NP_060884.1"/>
</dbReference>
<dbReference type="UCSC" id="uc002jsh.5">
    <property type="organism name" value="human"/>
</dbReference>
<dbReference type="AGR" id="HGNC:23614"/>
<dbReference type="CTD" id="55808"/>
<dbReference type="DisGeNET" id="55808"/>
<dbReference type="GeneCards" id="ST6GALNAC1"/>
<dbReference type="HGNC" id="HGNC:23614">
    <property type="gene designation" value="ST6GALNAC1"/>
</dbReference>
<dbReference type="HPA" id="ENSG00000070526">
    <property type="expression patterns" value="Group enriched (cervix, intestine, stomach)"/>
</dbReference>
<dbReference type="MIM" id="610138">
    <property type="type" value="gene"/>
</dbReference>
<dbReference type="neXtProt" id="NX_Q9NSC7"/>
<dbReference type="OpenTargets" id="ENSG00000070526"/>
<dbReference type="PharmGKB" id="PA134935906"/>
<dbReference type="VEuPathDB" id="HostDB:ENSG00000070526"/>
<dbReference type="eggNOG" id="KOG2692">
    <property type="taxonomic scope" value="Eukaryota"/>
</dbReference>
<dbReference type="GeneTree" id="ENSGT00940000159930"/>
<dbReference type="HOGENOM" id="CLU_032020_4_1_1"/>
<dbReference type="InParanoid" id="Q9NSC7"/>
<dbReference type="OMA" id="WDFEEQY"/>
<dbReference type="OrthoDB" id="10264956at2759"/>
<dbReference type="PAN-GO" id="Q9NSC7">
    <property type="GO annotations" value="2 GO annotations based on evolutionary models"/>
</dbReference>
<dbReference type="PhylomeDB" id="Q9NSC7"/>
<dbReference type="TreeFam" id="TF354325"/>
<dbReference type="BioCyc" id="MetaCyc:HS00998-MONOMER"/>
<dbReference type="BRENDA" id="2.4.99.3">
    <property type="organism ID" value="2681"/>
</dbReference>
<dbReference type="PathwayCommons" id="Q9NSC7"/>
<dbReference type="Reactome" id="R-HSA-4085001">
    <property type="pathway name" value="Sialic acid metabolism"/>
</dbReference>
<dbReference type="SignaLink" id="Q9NSC7"/>
<dbReference type="UniPathway" id="UPA00378"/>
<dbReference type="BioGRID-ORCS" id="55808">
    <property type="hits" value="10 hits in 1145 CRISPR screens"/>
</dbReference>
<dbReference type="ChiTaRS" id="ST6GALNAC1">
    <property type="organism name" value="human"/>
</dbReference>
<dbReference type="GeneWiki" id="ST6GALNAC1"/>
<dbReference type="GenomeRNAi" id="55808"/>
<dbReference type="Pharos" id="Q9NSC7">
    <property type="development level" value="Tbio"/>
</dbReference>
<dbReference type="PRO" id="PR:Q9NSC7"/>
<dbReference type="Proteomes" id="UP000005640">
    <property type="component" value="Chromosome 17"/>
</dbReference>
<dbReference type="RNAct" id="Q9NSC7">
    <property type="molecule type" value="protein"/>
</dbReference>
<dbReference type="Bgee" id="ENSG00000070526">
    <property type="expression patterns" value="Expressed in mucosa of sigmoid colon and 133 other cell types or tissues"/>
</dbReference>
<dbReference type="ExpressionAtlas" id="Q9NSC7">
    <property type="expression patterns" value="baseline and differential"/>
</dbReference>
<dbReference type="GO" id="GO:0000139">
    <property type="term" value="C:Golgi membrane"/>
    <property type="evidence" value="ECO:0000314"/>
    <property type="project" value="UniProtKB"/>
</dbReference>
<dbReference type="GO" id="GO:0001665">
    <property type="term" value="F:alpha-N-acetylgalactosaminide alpha-2,6-sialyltransferase activity"/>
    <property type="evidence" value="ECO:0000314"/>
    <property type="project" value="UniProtKB"/>
</dbReference>
<dbReference type="GO" id="GO:0008373">
    <property type="term" value="F:sialyltransferase activity"/>
    <property type="evidence" value="ECO:0000303"/>
    <property type="project" value="UniProtKB"/>
</dbReference>
<dbReference type="GO" id="GO:0048874">
    <property type="term" value="P:host-mediated regulation of intestinal microbiota composition"/>
    <property type="evidence" value="ECO:0000250"/>
    <property type="project" value="UniProtKB"/>
</dbReference>
<dbReference type="GO" id="GO:0009312">
    <property type="term" value="P:oligosaccharide biosynthetic process"/>
    <property type="evidence" value="ECO:0000318"/>
    <property type="project" value="GO_Central"/>
</dbReference>
<dbReference type="GO" id="GO:0006486">
    <property type="term" value="P:protein glycosylation"/>
    <property type="evidence" value="ECO:0000314"/>
    <property type="project" value="UniProtKB"/>
</dbReference>
<dbReference type="CDD" id="cd23973">
    <property type="entry name" value="GT29_ST6GALNAC1"/>
    <property type="match status" value="1"/>
</dbReference>
<dbReference type="FunFam" id="3.90.1480.20:FF:000013">
    <property type="entry name" value="ST6 N-acetylgalactosaminide alpha-2,6-sialyltransferase 1"/>
    <property type="match status" value="1"/>
</dbReference>
<dbReference type="Gene3D" id="3.90.1480.20">
    <property type="entry name" value="Glycosyl transferase family 29"/>
    <property type="match status" value="1"/>
</dbReference>
<dbReference type="InterPro" id="IPR001675">
    <property type="entry name" value="Glyco_trans_29"/>
</dbReference>
<dbReference type="InterPro" id="IPR038578">
    <property type="entry name" value="GT29-like_sf"/>
</dbReference>
<dbReference type="PANTHER" id="PTHR45941:SF1">
    <property type="entry name" value="ALPHA-N-ACETYLGALACTOSAMINIDE ALPHA-2,6-SIALYLTRANSFERASE 1"/>
    <property type="match status" value="1"/>
</dbReference>
<dbReference type="PANTHER" id="PTHR45941">
    <property type="entry name" value="ALPHA-N-ACETYLGALACTOSAMINIDE ALPHA-2,6-SIALYLTRANSFERASE 2-LIKE-RELATED"/>
    <property type="match status" value="1"/>
</dbReference>
<dbReference type="Pfam" id="PF00777">
    <property type="entry name" value="Glyco_transf_29"/>
    <property type="match status" value="1"/>
</dbReference>
<protein>
    <recommendedName>
        <fullName evidence="15">Alpha-N-acetylgalactosaminide alpha-2,6-sialyltransferase 1</fullName>
        <ecNumber evidence="8 10">2.4.3.3</ecNumber>
    </recommendedName>
    <alternativeName>
        <fullName evidence="11 12">GalNAc alpha-2,6-sialyltransferase I</fullName>
    </alternativeName>
    <alternativeName>
        <fullName evidence="11 12">ST6GalNAc I</fullName>
        <shortName evidence="14">ST6GalNAc-I</shortName>
        <shortName evidence="11 12">ST6GalNAcI</shortName>
        <shortName evidence="14">hST6GalNAc-I</shortName>
    </alternativeName>
    <alternativeName>
        <fullName>Sialyltransferase 7A</fullName>
        <shortName>SIAT7-A</shortName>
    </alternativeName>
</protein>
<name>SIA7A_HUMAN</name>
<sequence length="600" mass="68564">MRSCLWRCRHLSQGVQWSLLLAVLVFFLFALPSFIKEPQTKPSRHQRTENIKERSLQSLAKPKSQAPTRARRTTIYAEPVPENNALNTQTQPKAHTTGDRGKEANQAPPEEQDKVPHTAQRAAWKSPEKEKTMVNTLSPRGQDAGMASGRTEAQSWKSQDTKTTQGNGGQTRKLTASRTVSEKHQGKAATTAKTLIPKSQHRMLAPTGAVSTRTRQKGVTTAVIPPKEKKPQATPPPAPFQSPTTQRNQRLKAANFKSEPRWDFEEKYSFEIGGLQTTCPDSVKIKASKSLWLQKLFLPNLTLFLDSRHFNQSEWDRLEHFAPPFGFMELNYSLVQKVVTRFPPVPQQQLLLASLPAGSLRCITCAVVGNGGILNNSHMGQEIDSHDYVFRLSGALIKGYEQDVGTRTSFYGFTAFSLTQSLLILGNRGFKNVPLGKDVRYLHFLEGTRDYEWLEALLMNQTVMSKNLFWFRHRPQEAFREALHMDRYLLLHPDFLRYMKNRFLRSKTLDGAHWRIYRPTTGALLLLTALQLCDQVSAYGFITEGHERFSDHYYDTSWKRLIFYINHDFKLEREVWKRLHDEGIIRLYQRPGPGTAKAKN</sequence>
<reference key="1">
    <citation type="journal article" date="1999" name="Glycobiology">
        <title>Cloning and expression of a human gene encoding an N-acetylgalactosamine-alpha2,6-sialyltransferase (ST6GalNac I); a candidate for synthesis of cancer-associated sialyl-Tnantigens.</title>
        <authorList>
            <person name="Ikehara Y."/>
            <person name="Kojima N."/>
            <person name="Kurosawa N."/>
            <person name="Kudo T."/>
            <person name="Kono M."/>
            <person name="Nishihara S."/>
            <person name="Issiki S."/>
            <person name="Morozumi K."/>
            <person name="Itzkowitz S."/>
            <person name="Tsuda T."/>
            <person name="Nishimura S."/>
            <person name="Tsuji S."/>
            <person name="Narimatsu H."/>
        </authorList>
    </citation>
    <scope>NUCLEOTIDE SEQUENCE [GENOMIC DNA / MRNA]</scope>
    <scope>FUNCTION</scope>
    <scope>CATALYTIC ACTIVITY</scope>
</reference>
<reference key="2">
    <citation type="journal article" date="2001" name="Glycoconj. J.">
        <title>Expression of sialyl-Tn antigen in breast cancer cells transfected with the human CMP-Neu5Ac: GalNAc alpha2,6-sialyltransferase (ST6GalNac I) cDNA.</title>
        <authorList>
            <person name="Julien S."/>
            <person name="Krzewinski-Recchi M.A."/>
            <person name="Harduin-Lepers A."/>
            <person name="Gouyer V."/>
            <person name="Huet G."/>
            <person name="Le Bourhis X."/>
            <person name="Delannoy P."/>
        </authorList>
    </citation>
    <scope>NUCLEOTIDE SEQUENCE [MRNA]</scope>
</reference>
<reference key="3">
    <citation type="journal article" date="2003" name="Genome Res.">
        <title>The secreted protein discovery initiative (SPDI), a large-scale effort to identify novel human secreted and transmembrane proteins: a bioinformatics assessment.</title>
        <authorList>
            <person name="Clark H.F."/>
            <person name="Gurney A.L."/>
            <person name="Abaya E."/>
            <person name="Baker K."/>
            <person name="Baldwin D.T."/>
            <person name="Brush J."/>
            <person name="Chen J."/>
            <person name="Chow B."/>
            <person name="Chui C."/>
            <person name="Crowley C."/>
            <person name="Currell B."/>
            <person name="Deuel B."/>
            <person name="Dowd P."/>
            <person name="Eaton D."/>
            <person name="Foster J.S."/>
            <person name="Grimaldi C."/>
            <person name="Gu Q."/>
            <person name="Hass P.E."/>
            <person name="Heldens S."/>
            <person name="Huang A."/>
            <person name="Kim H.S."/>
            <person name="Klimowski L."/>
            <person name="Jin Y."/>
            <person name="Johnson S."/>
            <person name="Lee J."/>
            <person name="Lewis L."/>
            <person name="Liao D."/>
            <person name="Mark M.R."/>
            <person name="Robbie E."/>
            <person name="Sanchez C."/>
            <person name="Schoenfeld J."/>
            <person name="Seshagiri S."/>
            <person name="Simmons L."/>
            <person name="Singh J."/>
            <person name="Smith V."/>
            <person name="Stinson J."/>
            <person name="Vagts A."/>
            <person name="Vandlen R.L."/>
            <person name="Watanabe C."/>
            <person name="Wieand D."/>
            <person name="Woods K."/>
            <person name="Xie M.-H."/>
            <person name="Yansura D.G."/>
            <person name="Yi S."/>
            <person name="Yu G."/>
            <person name="Yuan J."/>
            <person name="Zhang M."/>
            <person name="Zhang Z."/>
            <person name="Goddard A.D."/>
            <person name="Wood W.I."/>
            <person name="Godowski P.J."/>
            <person name="Gray A.M."/>
        </authorList>
    </citation>
    <scope>NUCLEOTIDE SEQUENCE [LARGE SCALE MRNA]</scope>
    <scope>VARIANT ALA-80</scope>
</reference>
<reference key="4">
    <citation type="journal article" date="2004" name="Cancer Res.">
        <title>Role of the human ST6GalNAc-I and ST6GalNAc-II in the synthesis of the cancer-associated sialyl-Tn antigen.</title>
        <authorList>
            <person name="Marcos N.T."/>
            <person name="Pinho S."/>
            <person name="Grandela C."/>
            <person name="Cruz A."/>
            <person name="Samyn-Petit B."/>
            <person name="Harduin-Lepers A."/>
            <person name="Almeida R."/>
            <person name="Silva F."/>
            <person name="Morais V."/>
            <person name="Costa J."/>
            <person name="Kihlberg J."/>
            <person name="Clausen H."/>
            <person name="Reis C.A."/>
        </authorList>
    </citation>
    <scope>FUNCTION</scope>
    <scope>CATALYTIC ACTIVITY</scope>
    <scope>BIOPHYSICOCHEMICAL PROPERTIES</scope>
</reference>
<reference key="5">
    <citation type="journal article" date="2006" name="J. Biol. Chem.">
        <title>The ST6GalNAc-I sialyltransferase localizes throughout the Golgi and is responsible for the synthesis of the tumor-associated sialyl-Tn O-glycan in human breast cancer.</title>
        <authorList>
            <person name="Sewell R."/>
            <person name="Baeckstroem M."/>
            <person name="Dalziel M."/>
            <person name="Gschmeissner S."/>
            <person name="Karlsson H."/>
            <person name="Noll T."/>
            <person name="Gaetgens J."/>
            <person name="Clausen H."/>
            <person name="Hansson G.C."/>
            <person name="Burchell J."/>
            <person name="Taylor-Papadimitriou J."/>
        </authorList>
    </citation>
    <scope>FUNCTION</scope>
    <scope>CATALYTIC ACTIVITY</scope>
    <scope>PATHWAY</scope>
    <scope>SUBCELLULAR LOCATION</scope>
    <scope>TISSUE SPECIFICITY</scope>
</reference>
<reference key="6">
    <citation type="journal article" date="2019" name="Sci. Rep.">
        <title>Products of Chemoenzymatic Synthesis Representing MUC1 Tandem Repeat Unit with T-, ST- or STn-antigen Revealed Distinct Specificities of Anti-MUC1 Antibodies.</title>
        <authorList>
            <person name="Yoshimura Y."/>
            <person name="Denda-Nagai K."/>
            <person name="Takahashi Y."/>
            <person name="Nagashima I."/>
            <person name="Shimizu H."/>
            <person name="Kishimoto T."/>
            <person name="Noji M."/>
            <person name="Shichino S."/>
            <person name="Chiba Y."/>
            <person name="Irimura T."/>
        </authorList>
    </citation>
    <scope>FUNCTION</scope>
    <scope>CATALYTIC ACTIVITY</scope>
</reference>
<reference key="7">
    <citation type="journal article" date="2022" name="Cell">
        <title>Mucus sialylation determines intestinal host-commensal homeostasis.</title>
        <authorList>
            <person name="Yao Y."/>
            <person name="Kim G."/>
            <person name="Shafer S."/>
            <person name="Chen Z."/>
            <person name="Kubo S."/>
            <person name="Ji Y."/>
            <person name="Luo J."/>
            <person name="Yang W."/>
            <person name="Perner S.P."/>
            <person name="Kanellopoulou C."/>
            <person name="Park A.Y."/>
            <person name="Jiang P."/>
            <person name="Li J."/>
            <person name="Baris S."/>
            <person name="Aydiner E.K."/>
            <person name="Ertem D."/>
            <person name="Mulder D.J."/>
            <person name="Warner N."/>
            <person name="Griffiths A.M."/>
            <person name="Topf-Olivestone C."/>
            <person name="Kori M."/>
            <person name="Werner L."/>
            <person name="Ouahed J."/>
            <person name="Field M."/>
            <person name="Liu C."/>
            <person name="Schwarz B."/>
            <person name="Bosio C.M."/>
            <person name="Ganesan S."/>
            <person name="Song J."/>
            <person name="Urlaub H."/>
            <person name="Oellerich T."/>
            <person name="Malaker S.A."/>
            <person name="Zheng L."/>
            <person name="Bertozzi C.R."/>
            <person name="Zhang Y."/>
            <person name="Matthews H."/>
            <person name="Montgomery W."/>
            <person name="Shih H.Y."/>
            <person name="Jiang J."/>
            <person name="Jones M."/>
            <person name="Baras A."/>
            <person name="Shuldiner A."/>
            <person name="Gonzaga-Jauregui C."/>
            <person name="Snapper S.B."/>
            <person name="Muise A.M."/>
            <person name="Shouval D.S."/>
            <person name="Ozen A."/>
            <person name="Pan K.T."/>
            <person name="Wu C."/>
            <person name="Lenardo M.J."/>
        </authorList>
    </citation>
    <scope>FUNCTION</scope>
    <scope>CATALYTIC ACTIVITY</scope>
    <scope>PATHWAY</scope>
    <scope>SUBCELLULAR LOCATION</scope>
    <scope>TISSUE SPECIFICITY</scope>
    <scope>GLYCOSYLATION</scope>
    <scope>INVOLVEMENT IN INFLAMMATORY BOWEL DISEASE</scope>
    <scope>VARIANTS PRO-207; CYS-341; GLN-391 AND MET-462</scope>
    <scope>CHARACTERIZATION OF VARIANTS PRO-207; CYS-341; GLN-391 AND MET-462</scope>
</reference>
<proteinExistence type="evidence at protein level"/>
<evidence type="ECO:0000250" key="1">
    <source>
        <dbReference type="UniProtKB" id="Q92183"/>
    </source>
</evidence>
<evidence type="ECO:0000250" key="2">
    <source>
        <dbReference type="UniProtKB" id="Q9UJ37"/>
    </source>
</evidence>
<evidence type="ECO:0000255" key="3"/>
<evidence type="ECO:0000256" key="4">
    <source>
        <dbReference type="SAM" id="MobiDB-lite"/>
    </source>
</evidence>
<evidence type="ECO:0000269" key="5">
    <source>
    </source>
</evidence>
<evidence type="ECO:0000269" key="6">
    <source>
    </source>
</evidence>
<evidence type="ECO:0000269" key="7">
    <source>
    </source>
</evidence>
<evidence type="ECO:0000269" key="8">
    <source>
    </source>
</evidence>
<evidence type="ECO:0000269" key="9">
    <source>
    </source>
</evidence>
<evidence type="ECO:0000269" key="10">
    <source>
    </source>
</evidence>
<evidence type="ECO:0000303" key="11">
    <source>
    </source>
</evidence>
<evidence type="ECO:0000303" key="12">
    <source>
    </source>
</evidence>
<evidence type="ECO:0000303" key="13">
    <source>
    </source>
</evidence>
<evidence type="ECO:0000303" key="14">
    <source>
    </source>
</evidence>
<evidence type="ECO:0000305" key="15"/>
<evidence type="ECO:0000305" key="16">
    <source>
    </source>
</evidence>
<evidence type="ECO:0000305" key="17">
    <source>
    </source>
</evidence>
<evidence type="ECO:0000305" key="18">
    <source>
    </source>
</evidence>
<evidence type="ECO:0000312" key="19">
    <source>
        <dbReference type="HGNC" id="HGNC:23614"/>
    </source>
</evidence>